<dbReference type="EC" id="2.4.2.9" evidence="1"/>
<dbReference type="EMBL" id="CP000057">
    <property type="protein sequence ID" value="AAX87513.1"/>
    <property type="molecule type" value="Genomic_DNA"/>
</dbReference>
<dbReference type="RefSeq" id="WP_005626142.1">
    <property type="nucleotide sequence ID" value="NC_007146.2"/>
</dbReference>
<dbReference type="SMR" id="Q4QN84"/>
<dbReference type="GeneID" id="93219473"/>
<dbReference type="KEGG" id="hit:NTHI0589"/>
<dbReference type="HOGENOM" id="CLU_094234_2_1_6"/>
<dbReference type="Proteomes" id="UP000002525">
    <property type="component" value="Chromosome"/>
</dbReference>
<dbReference type="GO" id="GO:0004845">
    <property type="term" value="F:uracil phosphoribosyltransferase activity"/>
    <property type="evidence" value="ECO:0007669"/>
    <property type="project" value="UniProtKB-UniRule"/>
</dbReference>
<dbReference type="GO" id="GO:0006355">
    <property type="term" value="P:regulation of DNA-templated transcription"/>
    <property type="evidence" value="ECO:0007669"/>
    <property type="project" value="UniProtKB-UniRule"/>
</dbReference>
<dbReference type="CDD" id="cd06223">
    <property type="entry name" value="PRTases_typeI"/>
    <property type="match status" value="1"/>
</dbReference>
<dbReference type="FunFam" id="3.40.50.2020:FF:000020">
    <property type="entry name" value="Bifunctional protein PyrR"/>
    <property type="match status" value="1"/>
</dbReference>
<dbReference type="Gene3D" id="3.40.50.2020">
    <property type="match status" value="1"/>
</dbReference>
<dbReference type="HAMAP" id="MF_01219">
    <property type="entry name" value="PyrR"/>
    <property type="match status" value="1"/>
</dbReference>
<dbReference type="InterPro" id="IPR000836">
    <property type="entry name" value="PRibTrfase_dom"/>
</dbReference>
<dbReference type="InterPro" id="IPR029057">
    <property type="entry name" value="PRTase-like"/>
</dbReference>
<dbReference type="InterPro" id="IPR023050">
    <property type="entry name" value="PyrR"/>
</dbReference>
<dbReference type="InterPro" id="IPR050137">
    <property type="entry name" value="PyrR_bifunctional"/>
</dbReference>
<dbReference type="NCBIfam" id="NF003549">
    <property type="entry name" value="PRK05205.1-5"/>
    <property type="match status" value="1"/>
</dbReference>
<dbReference type="PANTHER" id="PTHR11608">
    <property type="entry name" value="BIFUNCTIONAL PROTEIN PYRR"/>
    <property type="match status" value="1"/>
</dbReference>
<dbReference type="PANTHER" id="PTHR11608:SF0">
    <property type="entry name" value="BIFUNCTIONAL PROTEIN PYRR"/>
    <property type="match status" value="1"/>
</dbReference>
<dbReference type="Pfam" id="PF00156">
    <property type="entry name" value="Pribosyltran"/>
    <property type="match status" value="1"/>
</dbReference>
<dbReference type="SUPFAM" id="SSF53271">
    <property type="entry name" value="PRTase-like"/>
    <property type="match status" value="1"/>
</dbReference>
<protein>
    <recommendedName>
        <fullName evidence="1">Bifunctional protein PyrR</fullName>
    </recommendedName>
    <domain>
        <recommendedName>
            <fullName evidence="1">Pyrimidine operon regulatory protein</fullName>
        </recommendedName>
    </domain>
    <domain>
        <recommendedName>
            <fullName evidence="1">Uracil phosphoribosyltransferase</fullName>
            <shortName evidence="1">UPRTase</shortName>
            <ecNumber evidence="1">2.4.2.9</ecNumber>
        </recommendedName>
    </domain>
</protein>
<accession>Q4QN84</accession>
<comment type="function">
    <text evidence="1">Regulates the transcription of the pyrimidine nucleotide (pyr) operon in response to exogenous pyrimidines.</text>
</comment>
<comment type="function">
    <text evidence="1">Also displays a weak uracil phosphoribosyltransferase activity which is not physiologically significant.</text>
</comment>
<comment type="catalytic activity">
    <reaction evidence="1">
        <text>UMP + diphosphate = 5-phospho-alpha-D-ribose 1-diphosphate + uracil</text>
        <dbReference type="Rhea" id="RHEA:13017"/>
        <dbReference type="ChEBI" id="CHEBI:17568"/>
        <dbReference type="ChEBI" id="CHEBI:33019"/>
        <dbReference type="ChEBI" id="CHEBI:57865"/>
        <dbReference type="ChEBI" id="CHEBI:58017"/>
        <dbReference type="EC" id="2.4.2.9"/>
    </reaction>
</comment>
<comment type="similarity">
    <text evidence="1">Belongs to the purine/pyrimidine phosphoribosyltransferase family. PyrR subfamily.</text>
</comment>
<evidence type="ECO:0000255" key="1">
    <source>
        <dbReference type="HAMAP-Rule" id="MF_01219"/>
    </source>
</evidence>
<keyword id="KW-0328">Glycosyltransferase</keyword>
<keyword id="KW-0804">Transcription</keyword>
<keyword id="KW-0805">Transcription regulation</keyword>
<keyword id="KW-0808">Transferase</keyword>
<sequence>MEKIIIDHDRFLRTISRISHEIIEKHQTLDDLVIVGIKRRGAEIAELLQRRVEELSGINLPSMELDITFYRDDLTLVDQEDKMPVYSGSSQYLNIQDKTVILVDDVLFTGRTIRAAMDALTDFGRAAKIELVIFVDRGHRELPIRADYVGKNVPTSRDELVQVRTEKQDGCYEVAILGK</sequence>
<gene>
    <name evidence="1" type="primary">pyrR</name>
    <name type="ordered locus">NTHI0589</name>
</gene>
<proteinExistence type="inferred from homology"/>
<reference key="1">
    <citation type="journal article" date="2005" name="J. Bacteriol.">
        <title>Genomic sequence of an otitis media isolate of nontypeable Haemophilus influenzae: comparative study with H. influenzae serotype d, strain KW20.</title>
        <authorList>
            <person name="Harrison A."/>
            <person name="Dyer D.W."/>
            <person name="Gillaspy A."/>
            <person name="Ray W.C."/>
            <person name="Mungur R."/>
            <person name="Carson M.B."/>
            <person name="Zhong H."/>
            <person name="Gipson J."/>
            <person name="Gipson M."/>
            <person name="Johnson L.S."/>
            <person name="Lewis L."/>
            <person name="Bakaletz L.O."/>
            <person name="Munson R.S. Jr."/>
        </authorList>
    </citation>
    <scope>NUCLEOTIDE SEQUENCE [LARGE SCALE GENOMIC DNA]</scope>
    <source>
        <strain>86-028NP</strain>
    </source>
</reference>
<name>PYRR_HAEI8</name>
<organism>
    <name type="scientific">Haemophilus influenzae (strain 86-028NP)</name>
    <dbReference type="NCBI Taxonomy" id="281310"/>
    <lineage>
        <taxon>Bacteria</taxon>
        <taxon>Pseudomonadati</taxon>
        <taxon>Pseudomonadota</taxon>
        <taxon>Gammaproteobacteria</taxon>
        <taxon>Pasteurellales</taxon>
        <taxon>Pasteurellaceae</taxon>
        <taxon>Haemophilus</taxon>
    </lineage>
</organism>
<feature type="chain" id="PRO_1000053837" description="Bifunctional protein PyrR">
    <location>
        <begin position="1"/>
        <end position="179"/>
    </location>
</feature>
<feature type="short sequence motif" description="PRPP-binding" evidence="1">
    <location>
        <begin position="100"/>
        <end position="112"/>
    </location>
</feature>